<feature type="chain" id="PRO_1000134349" description="2,3-diketo-L-gulonate reductase">
    <location>
        <begin position="1"/>
        <end position="332"/>
    </location>
</feature>
<feature type="active site" description="Proton donor" evidence="1">
    <location>
        <position position="44"/>
    </location>
</feature>
<feature type="binding site" evidence="1">
    <location>
        <begin position="168"/>
        <end position="174"/>
    </location>
    <ligand>
        <name>NAD(+)</name>
        <dbReference type="ChEBI" id="CHEBI:57540"/>
    </ligand>
</feature>
<feature type="binding site" evidence="1">
    <location>
        <begin position="224"/>
        <end position="225"/>
    </location>
    <ligand>
        <name>NAD(+)</name>
        <dbReference type="ChEBI" id="CHEBI:57540"/>
    </ligand>
</feature>
<feature type="binding site" evidence="1">
    <location>
        <begin position="304"/>
        <end position="306"/>
    </location>
    <ligand>
        <name>NAD(+)</name>
        <dbReference type="ChEBI" id="CHEBI:57540"/>
    </ligand>
</feature>
<reference key="1">
    <citation type="journal article" date="2011" name="J. Bacteriol.">
        <title>Comparative genomics of 28 Salmonella enterica isolates: evidence for CRISPR-mediated adaptive sublineage evolution.</title>
        <authorList>
            <person name="Fricke W.F."/>
            <person name="Mammel M.K."/>
            <person name="McDermott P.F."/>
            <person name="Tartera C."/>
            <person name="White D.G."/>
            <person name="Leclerc J.E."/>
            <person name="Ravel J."/>
            <person name="Cebula T.A."/>
        </authorList>
    </citation>
    <scope>NUCLEOTIDE SEQUENCE [LARGE SCALE GENOMIC DNA]</scope>
    <source>
        <strain>SL476</strain>
    </source>
</reference>
<keyword id="KW-0963">Cytoplasm</keyword>
<keyword id="KW-0520">NAD</keyword>
<keyword id="KW-0560">Oxidoreductase</keyword>
<name>DLGD_SALHS</name>
<proteinExistence type="inferred from homology"/>
<comment type="function">
    <text evidence="1">Catalyzes the reduction of 2,3-diketo-L-gulonate in the presence of NADH, to form 3-keto-L-gulonate.</text>
</comment>
<comment type="catalytic activity">
    <reaction evidence="1">
        <text>3-dehydro-L-gulonate + NAD(+) = 2,3-dioxo-L-gulonate + NADH + H(+)</text>
        <dbReference type="Rhea" id="RHEA:21924"/>
        <dbReference type="ChEBI" id="CHEBI:15378"/>
        <dbReference type="ChEBI" id="CHEBI:57441"/>
        <dbReference type="ChEBI" id="CHEBI:57540"/>
        <dbReference type="ChEBI" id="CHEBI:57655"/>
        <dbReference type="ChEBI" id="CHEBI:57945"/>
        <dbReference type="EC" id="1.1.1.130"/>
    </reaction>
</comment>
<comment type="catalytic activity">
    <reaction evidence="1">
        <text>3-dehydro-L-gulonate + NADP(+) = 2,3-dioxo-L-gulonate + NADPH + H(+)</text>
        <dbReference type="Rhea" id="RHEA:21928"/>
        <dbReference type="ChEBI" id="CHEBI:15378"/>
        <dbReference type="ChEBI" id="CHEBI:57441"/>
        <dbReference type="ChEBI" id="CHEBI:57655"/>
        <dbReference type="ChEBI" id="CHEBI:57783"/>
        <dbReference type="ChEBI" id="CHEBI:58349"/>
        <dbReference type="EC" id="1.1.1.130"/>
    </reaction>
</comment>
<comment type="subunit">
    <text evidence="1">Homodimer.</text>
</comment>
<comment type="subcellular location">
    <subcellularLocation>
        <location evidence="1">Cytoplasm</location>
    </subcellularLocation>
</comment>
<comment type="similarity">
    <text evidence="1">Belongs to the LDH2/MDH2 oxidoreductase family. DlgD subfamily.</text>
</comment>
<accession>B4T959</accession>
<organism>
    <name type="scientific">Salmonella heidelberg (strain SL476)</name>
    <dbReference type="NCBI Taxonomy" id="454169"/>
    <lineage>
        <taxon>Bacteria</taxon>
        <taxon>Pseudomonadati</taxon>
        <taxon>Pseudomonadota</taxon>
        <taxon>Gammaproteobacteria</taxon>
        <taxon>Enterobacterales</taxon>
        <taxon>Enterobacteriaceae</taxon>
        <taxon>Salmonella</taxon>
    </lineage>
</organism>
<sequence>MKVTFEELKGAFYRVLRSRNIAEDTADACAEMFARTTESGVYSHGVNRFPRFIQQLDNGDIIPDAKPQRVTSLGAIEQWDAQRAIGNLTAKKMMDRAIELASDHGIGLVALRNANHWMRGGSYGWQAAERGYIGICWTNSIAVMPPWGAKECRIGTNPLIVAIPSTPITMVDMSMSMFSYGMLEVNRLAGRELPVDGGFDDNGQLTKEPGVIEKNRRILPMGYWKGSGLSIVLDMIATLLSNGSSVAEVTQENSDEYGVSQIFIAIEVDKLIDGATRDAKLQRIMDFITTAERADDNVAIRLPGHEFTKLLDDNRRHGITIDDSVWAKIQAL</sequence>
<protein>
    <recommendedName>
        <fullName evidence="1">2,3-diketo-L-gulonate reductase</fullName>
        <shortName evidence="1">2,3-DKG reductase</shortName>
        <ecNumber evidence="1">1.1.1.130</ecNumber>
    </recommendedName>
    <alternativeName>
        <fullName evidence="1">3-dehydro-L-gulonate 2-dehydrogenase</fullName>
    </alternativeName>
</protein>
<evidence type="ECO:0000255" key="1">
    <source>
        <dbReference type="HAMAP-Rule" id="MF_00820"/>
    </source>
</evidence>
<dbReference type="EC" id="1.1.1.130" evidence="1"/>
<dbReference type="EMBL" id="CP001120">
    <property type="protein sequence ID" value="ACF66975.1"/>
    <property type="molecule type" value="Genomic_DNA"/>
</dbReference>
<dbReference type="SMR" id="B4T959"/>
<dbReference type="KEGG" id="seh:SeHA_C3991"/>
<dbReference type="HOGENOM" id="CLU_040452_4_0_6"/>
<dbReference type="Proteomes" id="UP000001866">
    <property type="component" value="Chromosome"/>
</dbReference>
<dbReference type="GO" id="GO:0005737">
    <property type="term" value="C:cytoplasm"/>
    <property type="evidence" value="ECO:0007669"/>
    <property type="project" value="UniProtKB-SubCell"/>
</dbReference>
<dbReference type="GO" id="GO:0047559">
    <property type="term" value="F:3-dehydro-L-gulonate 2-dehydrogenase activity"/>
    <property type="evidence" value="ECO:0007669"/>
    <property type="project" value="UniProtKB-UniRule"/>
</dbReference>
<dbReference type="GO" id="GO:0070403">
    <property type="term" value="F:NAD+ binding"/>
    <property type="evidence" value="ECO:0007669"/>
    <property type="project" value="InterPro"/>
</dbReference>
<dbReference type="Gene3D" id="1.10.1530.10">
    <property type="match status" value="1"/>
</dbReference>
<dbReference type="Gene3D" id="3.30.1370.60">
    <property type="entry name" value="Hypothetical oxidoreductase yiak, domain 2"/>
    <property type="match status" value="1"/>
</dbReference>
<dbReference type="Gene3D" id="3.30.60.50">
    <property type="entry name" value="Hypothetical oxidoreductase yiak, domain 3"/>
    <property type="match status" value="1"/>
</dbReference>
<dbReference type="HAMAP" id="MF_00820">
    <property type="entry name" value="Diketo_gul_reduc"/>
    <property type="match status" value="1"/>
</dbReference>
<dbReference type="InterPro" id="IPR023689">
    <property type="entry name" value="Diketo_gul_Rdtase"/>
</dbReference>
<dbReference type="InterPro" id="IPR043144">
    <property type="entry name" value="Mal/L-sulf/L-lact_DH-like_ah"/>
</dbReference>
<dbReference type="InterPro" id="IPR043143">
    <property type="entry name" value="Mal/L-sulf/L-lact_DH-like_NADP"/>
</dbReference>
<dbReference type="InterPro" id="IPR036111">
    <property type="entry name" value="Mal/L-sulfo/L-lacto_DH-like_sf"/>
</dbReference>
<dbReference type="InterPro" id="IPR003767">
    <property type="entry name" value="Malate/L-lactate_DH-like"/>
</dbReference>
<dbReference type="NCBIfam" id="NF009750">
    <property type="entry name" value="PRK13260.1"/>
    <property type="match status" value="1"/>
</dbReference>
<dbReference type="PANTHER" id="PTHR11091:SF3">
    <property type="entry name" value="2,3-DIKETO-L-GULONATE REDUCTASE"/>
    <property type="match status" value="1"/>
</dbReference>
<dbReference type="PANTHER" id="PTHR11091">
    <property type="entry name" value="OXIDOREDUCTASE-RELATED"/>
    <property type="match status" value="1"/>
</dbReference>
<dbReference type="Pfam" id="PF02615">
    <property type="entry name" value="Ldh_2"/>
    <property type="match status" value="1"/>
</dbReference>
<dbReference type="SUPFAM" id="SSF89733">
    <property type="entry name" value="L-sulfolactate dehydrogenase-like"/>
    <property type="match status" value="1"/>
</dbReference>
<gene>
    <name evidence="1" type="primary">dlgD</name>
    <name type="ordered locus">SeHA_C3991</name>
</gene>